<dbReference type="EMBL" id="CP001197">
    <property type="protein sequence ID" value="ACL07919.1"/>
    <property type="molecule type" value="Genomic_DNA"/>
</dbReference>
<dbReference type="SMR" id="B8DP87"/>
<dbReference type="STRING" id="883.DvMF_0964"/>
<dbReference type="KEGG" id="dvm:DvMF_0964"/>
<dbReference type="eggNOG" id="COG2001">
    <property type="taxonomic scope" value="Bacteria"/>
</dbReference>
<dbReference type="HOGENOM" id="CLU_107907_2_2_7"/>
<dbReference type="OrthoDB" id="9807753at2"/>
<dbReference type="GO" id="GO:0005737">
    <property type="term" value="C:cytoplasm"/>
    <property type="evidence" value="ECO:0007669"/>
    <property type="project" value="UniProtKB-UniRule"/>
</dbReference>
<dbReference type="GO" id="GO:0009295">
    <property type="term" value="C:nucleoid"/>
    <property type="evidence" value="ECO:0007669"/>
    <property type="project" value="UniProtKB-SubCell"/>
</dbReference>
<dbReference type="GO" id="GO:0003700">
    <property type="term" value="F:DNA-binding transcription factor activity"/>
    <property type="evidence" value="ECO:0007669"/>
    <property type="project" value="UniProtKB-UniRule"/>
</dbReference>
<dbReference type="GO" id="GO:0000976">
    <property type="term" value="F:transcription cis-regulatory region binding"/>
    <property type="evidence" value="ECO:0007669"/>
    <property type="project" value="TreeGrafter"/>
</dbReference>
<dbReference type="GO" id="GO:2000143">
    <property type="term" value="P:negative regulation of DNA-templated transcription initiation"/>
    <property type="evidence" value="ECO:0007669"/>
    <property type="project" value="TreeGrafter"/>
</dbReference>
<dbReference type="CDD" id="cd16321">
    <property type="entry name" value="MraZ_C"/>
    <property type="match status" value="1"/>
</dbReference>
<dbReference type="CDD" id="cd16320">
    <property type="entry name" value="MraZ_N"/>
    <property type="match status" value="1"/>
</dbReference>
<dbReference type="Gene3D" id="3.40.1550.20">
    <property type="entry name" value="Transcriptional regulator MraZ domain"/>
    <property type="match status" value="1"/>
</dbReference>
<dbReference type="HAMAP" id="MF_01008">
    <property type="entry name" value="MraZ"/>
    <property type="match status" value="1"/>
</dbReference>
<dbReference type="InterPro" id="IPR003444">
    <property type="entry name" value="MraZ"/>
</dbReference>
<dbReference type="InterPro" id="IPR035644">
    <property type="entry name" value="MraZ_C"/>
</dbReference>
<dbReference type="InterPro" id="IPR020603">
    <property type="entry name" value="MraZ_dom"/>
</dbReference>
<dbReference type="InterPro" id="IPR035642">
    <property type="entry name" value="MraZ_N"/>
</dbReference>
<dbReference type="InterPro" id="IPR038619">
    <property type="entry name" value="MraZ_sf"/>
</dbReference>
<dbReference type="InterPro" id="IPR007159">
    <property type="entry name" value="SpoVT-AbrB_dom"/>
</dbReference>
<dbReference type="InterPro" id="IPR037914">
    <property type="entry name" value="SpoVT-AbrB_sf"/>
</dbReference>
<dbReference type="NCBIfam" id="TIGR00242">
    <property type="entry name" value="division/cell wall cluster transcriptional repressor MraZ"/>
    <property type="match status" value="1"/>
</dbReference>
<dbReference type="PANTHER" id="PTHR34701">
    <property type="entry name" value="TRANSCRIPTIONAL REGULATOR MRAZ"/>
    <property type="match status" value="1"/>
</dbReference>
<dbReference type="PANTHER" id="PTHR34701:SF1">
    <property type="entry name" value="TRANSCRIPTIONAL REGULATOR MRAZ"/>
    <property type="match status" value="1"/>
</dbReference>
<dbReference type="Pfam" id="PF02381">
    <property type="entry name" value="MraZ"/>
    <property type="match status" value="2"/>
</dbReference>
<dbReference type="SUPFAM" id="SSF89447">
    <property type="entry name" value="AbrB/MazE/MraZ-like"/>
    <property type="match status" value="1"/>
</dbReference>
<dbReference type="PROSITE" id="PS51740">
    <property type="entry name" value="SPOVT_ABRB"/>
    <property type="match status" value="2"/>
</dbReference>
<gene>
    <name evidence="1" type="primary">mraZ</name>
    <name type="ordered locus">DvMF_0964</name>
</gene>
<evidence type="ECO:0000255" key="1">
    <source>
        <dbReference type="HAMAP-Rule" id="MF_01008"/>
    </source>
</evidence>
<evidence type="ECO:0000255" key="2">
    <source>
        <dbReference type="PROSITE-ProRule" id="PRU01076"/>
    </source>
</evidence>
<comment type="subunit">
    <text evidence="1">Forms oligomers.</text>
</comment>
<comment type="subcellular location">
    <subcellularLocation>
        <location evidence="1">Cytoplasm</location>
        <location evidence="1">Nucleoid</location>
    </subcellularLocation>
</comment>
<comment type="similarity">
    <text evidence="1">Belongs to the MraZ family.</text>
</comment>
<keyword id="KW-0963">Cytoplasm</keyword>
<keyword id="KW-0238">DNA-binding</keyword>
<keyword id="KW-0677">Repeat</keyword>
<keyword id="KW-0804">Transcription</keyword>
<keyword id="KW-0805">Transcription regulation</keyword>
<reference key="1">
    <citation type="submission" date="2008-10" db="EMBL/GenBank/DDBJ databases">
        <title>Complete sequence of Desulfovibrio vulgaris str. 'Miyazaki F'.</title>
        <authorList>
            <person name="Lucas S."/>
            <person name="Copeland A."/>
            <person name="Lapidus A."/>
            <person name="Glavina del Rio T."/>
            <person name="Dalin E."/>
            <person name="Tice H."/>
            <person name="Bruce D."/>
            <person name="Goodwin L."/>
            <person name="Pitluck S."/>
            <person name="Sims D."/>
            <person name="Brettin T."/>
            <person name="Detter J.C."/>
            <person name="Han C."/>
            <person name="Larimer F."/>
            <person name="Land M."/>
            <person name="Hauser L."/>
            <person name="Kyrpides N."/>
            <person name="Mikhailova N."/>
            <person name="Hazen T.C."/>
            <person name="Richardson P."/>
        </authorList>
    </citation>
    <scope>NUCLEOTIDE SEQUENCE [LARGE SCALE GENOMIC DNA]</scope>
    <source>
        <strain>DSM 19637 / Miyazaki F</strain>
    </source>
</reference>
<protein>
    <recommendedName>
        <fullName>Transcriptional regulator MraZ</fullName>
    </recommendedName>
</protein>
<name>MRAZ_NITV9</name>
<sequence>MLFRGRSHRSLDPKGRLMLPPDFRDILMSRAEGGKLVLTSFDDCVMGYPLPDWEDFERKFSTLKNPSRKMRDFRRLVIGSAELMELDGQGRVRISRSHMDYAGITKDVVLLGQGSRFEIWDQGRFDGIVTQDFDDVAAELADSGIELSL</sequence>
<accession>B8DP87</accession>
<feature type="chain" id="PRO_1000134786" description="Transcriptional regulator MraZ">
    <location>
        <begin position="1"/>
        <end position="149"/>
    </location>
</feature>
<feature type="domain" description="SpoVT-AbrB 1" evidence="2">
    <location>
        <begin position="6"/>
        <end position="52"/>
    </location>
</feature>
<feature type="domain" description="SpoVT-AbrB 2" evidence="2">
    <location>
        <begin position="81"/>
        <end position="124"/>
    </location>
</feature>
<organism>
    <name type="scientific">Nitratidesulfovibrio vulgaris (strain DSM 19637 / Miyazaki F)</name>
    <name type="common">Desulfovibrio vulgaris</name>
    <dbReference type="NCBI Taxonomy" id="883"/>
    <lineage>
        <taxon>Bacteria</taxon>
        <taxon>Pseudomonadati</taxon>
        <taxon>Thermodesulfobacteriota</taxon>
        <taxon>Desulfovibrionia</taxon>
        <taxon>Desulfovibrionales</taxon>
        <taxon>Desulfovibrionaceae</taxon>
        <taxon>Nitratidesulfovibrio</taxon>
    </lineage>
</organism>
<proteinExistence type="inferred from homology"/>